<name>CLPP_STAAB</name>
<feature type="chain" id="PRO_0000226470" description="ATP-dependent Clp protease proteolytic subunit">
    <location>
        <begin position="1"/>
        <end position="195"/>
    </location>
</feature>
<feature type="active site" description="Nucleophile" evidence="1">
    <location>
        <position position="98"/>
    </location>
</feature>
<feature type="active site" evidence="1">
    <location>
        <position position="123"/>
    </location>
</feature>
<accession>Q2YSF8</accession>
<gene>
    <name evidence="1" type="primary">clpP</name>
    <name type="ordered locus">SAB0722</name>
</gene>
<reference key="1">
    <citation type="journal article" date="2007" name="PLoS ONE">
        <title>Molecular correlates of host specialization in Staphylococcus aureus.</title>
        <authorList>
            <person name="Herron-Olson L."/>
            <person name="Fitzgerald J.R."/>
            <person name="Musser J.M."/>
            <person name="Kapur V."/>
        </authorList>
    </citation>
    <scope>NUCLEOTIDE SEQUENCE [LARGE SCALE GENOMIC DNA]</scope>
    <source>
        <strain>bovine RF122 / ET3-1</strain>
    </source>
</reference>
<evidence type="ECO:0000255" key="1">
    <source>
        <dbReference type="HAMAP-Rule" id="MF_00444"/>
    </source>
</evidence>
<proteinExistence type="evidence at protein level"/>
<sequence length="195" mass="21514">MNLIPTVIETTNRGERAYDIYSRLLKDRIIMLGSQIDDNVANSIVSQLLFLQAQDSEKDIYLYINSPGGSVTAGFAIYDTIQHIKPDVQTICIGMAASMGSFLLAAGAKGKRFALPNAEVMIHQPLGGAQGQATEIEIAANHILKTREKLNRILSERTGQSIEKIQKDTDRDNFLTAEEAKEYGLIDEVMVPETK</sequence>
<comment type="function">
    <text evidence="1">Cleaves peptides in various proteins in a process that requires ATP hydrolysis. Has a chymotrypsin-like activity. Plays a major role in the degradation of misfolded proteins.</text>
</comment>
<comment type="catalytic activity">
    <reaction evidence="1">
        <text>Hydrolysis of proteins to small peptides in the presence of ATP and magnesium. alpha-casein is the usual test substrate. In the absence of ATP, only oligopeptides shorter than five residues are hydrolyzed (such as succinyl-Leu-Tyr-|-NHMec, and Leu-Tyr-Leu-|-Tyr-Trp, in which cleavage of the -Tyr-|-Leu- and -Tyr-|-Trp bonds also occurs).</text>
        <dbReference type="EC" id="3.4.21.92"/>
    </reaction>
</comment>
<comment type="subunit">
    <text evidence="1">Fourteen ClpP subunits assemble into 2 heptameric rings which stack back to back to give a disk-like structure with a central cavity, resembling the structure of eukaryotic proteasomes.</text>
</comment>
<comment type="subcellular location">
    <subcellularLocation>
        <location evidence="1">Cytoplasm</location>
    </subcellularLocation>
</comment>
<comment type="similarity">
    <text evidence="1">Belongs to the peptidase S14 family.</text>
</comment>
<organism>
    <name type="scientific">Staphylococcus aureus (strain bovine RF122 / ET3-1)</name>
    <dbReference type="NCBI Taxonomy" id="273036"/>
    <lineage>
        <taxon>Bacteria</taxon>
        <taxon>Bacillati</taxon>
        <taxon>Bacillota</taxon>
        <taxon>Bacilli</taxon>
        <taxon>Bacillales</taxon>
        <taxon>Staphylococcaceae</taxon>
        <taxon>Staphylococcus</taxon>
    </lineage>
</organism>
<dbReference type="EC" id="3.4.21.92" evidence="1"/>
<dbReference type="EMBL" id="AJ938182">
    <property type="protein sequence ID" value="CAI80410.1"/>
    <property type="molecule type" value="Genomic_DNA"/>
</dbReference>
<dbReference type="RefSeq" id="WP_001049165.1">
    <property type="nucleotide sequence ID" value="NC_007622.1"/>
</dbReference>
<dbReference type="PDB" id="5DL1">
    <property type="method" value="X-ray"/>
    <property type="resolution" value="3.00 A"/>
    <property type="chains" value="A/B/C/D/E/F/G/H/I/J/K/L/M/N=1-195"/>
</dbReference>
<dbReference type="PDBsum" id="5DL1"/>
<dbReference type="SMR" id="Q2YSF8"/>
<dbReference type="MEROPS" id="S14.001"/>
<dbReference type="GeneID" id="98345115"/>
<dbReference type="KEGG" id="sab:SAB0722"/>
<dbReference type="HOGENOM" id="CLU_058707_3_2_9"/>
<dbReference type="GO" id="GO:0005737">
    <property type="term" value="C:cytoplasm"/>
    <property type="evidence" value="ECO:0007669"/>
    <property type="project" value="UniProtKB-SubCell"/>
</dbReference>
<dbReference type="GO" id="GO:0009368">
    <property type="term" value="C:endopeptidase Clp complex"/>
    <property type="evidence" value="ECO:0007669"/>
    <property type="project" value="TreeGrafter"/>
</dbReference>
<dbReference type="GO" id="GO:0004176">
    <property type="term" value="F:ATP-dependent peptidase activity"/>
    <property type="evidence" value="ECO:0007669"/>
    <property type="project" value="InterPro"/>
</dbReference>
<dbReference type="GO" id="GO:0051117">
    <property type="term" value="F:ATPase binding"/>
    <property type="evidence" value="ECO:0007669"/>
    <property type="project" value="TreeGrafter"/>
</dbReference>
<dbReference type="GO" id="GO:0004252">
    <property type="term" value="F:serine-type endopeptidase activity"/>
    <property type="evidence" value="ECO:0007669"/>
    <property type="project" value="UniProtKB-UniRule"/>
</dbReference>
<dbReference type="GO" id="GO:0006515">
    <property type="term" value="P:protein quality control for misfolded or incompletely synthesized proteins"/>
    <property type="evidence" value="ECO:0007669"/>
    <property type="project" value="TreeGrafter"/>
</dbReference>
<dbReference type="CDD" id="cd07017">
    <property type="entry name" value="S14_ClpP_2"/>
    <property type="match status" value="1"/>
</dbReference>
<dbReference type="FunFam" id="3.90.226.10:FF:000001">
    <property type="entry name" value="ATP-dependent Clp protease proteolytic subunit"/>
    <property type="match status" value="1"/>
</dbReference>
<dbReference type="Gene3D" id="3.90.226.10">
    <property type="entry name" value="2-enoyl-CoA Hydratase, Chain A, domain 1"/>
    <property type="match status" value="1"/>
</dbReference>
<dbReference type="HAMAP" id="MF_00444">
    <property type="entry name" value="ClpP"/>
    <property type="match status" value="1"/>
</dbReference>
<dbReference type="InterPro" id="IPR001907">
    <property type="entry name" value="ClpP"/>
</dbReference>
<dbReference type="InterPro" id="IPR029045">
    <property type="entry name" value="ClpP/crotonase-like_dom_sf"/>
</dbReference>
<dbReference type="InterPro" id="IPR023562">
    <property type="entry name" value="ClpP/TepA"/>
</dbReference>
<dbReference type="InterPro" id="IPR033135">
    <property type="entry name" value="ClpP_His_AS"/>
</dbReference>
<dbReference type="InterPro" id="IPR018215">
    <property type="entry name" value="ClpP_Ser_AS"/>
</dbReference>
<dbReference type="NCBIfam" id="TIGR00493">
    <property type="entry name" value="clpP"/>
    <property type="match status" value="1"/>
</dbReference>
<dbReference type="NCBIfam" id="NF001368">
    <property type="entry name" value="PRK00277.1"/>
    <property type="match status" value="1"/>
</dbReference>
<dbReference type="NCBIfam" id="NF009205">
    <property type="entry name" value="PRK12553.1"/>
    <property type="match status" value="1"/>
</dbReference>
<dbReference type="PANTHER" id="PTHR10381">
    <property type="entry name" value="ATP-DEPENDENT CLP PROTEASE PROTEOLYTIC SUBUNIT"/>
    <property type="match status" value="1"/>
</dbReference>
<dbReference type="PANTHER" id="PTHR10381:SF70">
    <property type="entry name" value="ATP-DEPENDENT CLP PROTEASE PROTEOLYTIC SUBUNIT"/>
    <property type="match status" value="1"/>
</dbReference>
<dbReference type="Pfam" id="PF00574">
    <property type="entry name" value="CLP_protease"/>
    <property type="match status" value="1"/>
</dbReference>
<dbReference type="PRINTS" id="PR00127">
    <property type="entry name" value="CLPPROTEASEP"/>
</dbReference>
<dbReference type="SUPFAM" id="SSF52096">
    <property type="entry name" value="ClpP/crotonase"/>
    <property type="match status" value="1"/>
</dbReference>
<dbReference type="PROSITE" id="PS00382">
    <property type="entry name" value="CLP_PROTEASE_HIS"/>
    <property type="match status" value="1"/>
</dbReference>
<dbReference type="PROSITE" id="PS00381">
    <property type="entry name" value="CLP_PROTEASE_SER"/>
    <property type="match status" value="1"/>
</dbReference>
<protein>
    <recommendedName>
        <fullName evidence="1">ATP-dependent Clp protease proteolytic subunit</fullName>
        <ecNumber evidence="1">3.4.21.92</ecNumber>
    </recommendedName>
    <alternativeName>
        <fullName evidence="1">Endopeptidase Clp</fullName>
    </alternativeName>
</protein>
<keyword id="KW-0002">3D-structure</keyword>
<keyword id="KW-0963">Cytoplasm</keyword>
<keyword id="KW-0378">Hydrolase</keyword>
<keyword id="KW-0645">Protease</keyword>
<keyword id="KW-0720">Serine protease</keyword>